<accession>P39008</accession>
<accession>D6W1M7</accession>
<organism>
    <name type="scientific">Saccharomyces cerevisiae (strain ATCC 204508 / S288c)</name>
    <name type="common">Baker's yeast</name>
    <dbReference type="NCBI Taxonomy" id="559292"/>
    <lineage>
        <taxon>Eukaryota</taxon>
        <taxon>Fungi</taxon>
        <taxon>Dikarya</taxon>
        <taxon>Ascomycota</taxon>
        <taxon>Saccharomycotina</taxon>
        <taxon>Saccharomycetes</taxon>
        <taxon>Saccharomycetales</taxon>
        <taxon>Saccharomycetaceae</taxon>
        <taxon>Saccharomyces</taxon>
    </lineage>
</organism>
<comment type="function">
    <text evidence="4 6 9 10">Acts as a probably catalytic component of the CCR4-NOT core complex, which in the nucleus seems to be a general transcription factor, and in the cytoplasm the major mRNA deadenylase involved in mRNA turnover. In vitro, POP2 has 3'-exoribonuclease activity with a preference for poly(A) RNAs, but also degrades poly(U) and poly(C) RNAs. Is part of a glucose-sensing system involved in growth control in response to glucose availability.</text>
</comment>
<comment type="catalytic activity">
    <reaction>
        <text>Exonucleolytic cleavage of poly(A) to 5'-AMP.</text>
        <dbReference type="EC" id="3.1.13.4"/>
    </reaction>
</comment>
<comment type="cofactor">
    <cofactor>
        <name>Mg(2+)</name>
        <dbReference type="ChEBI" id="CHEBI:18420"/>
    </cofactor>
    <text>Divalent metal cations. Mg(2+) is the most probable.</text>
</comment>
<comment type="subunit">
    <text evidence="3 7 9 10">Subunit of the 1.0 MDa CCR4-NOT core complex that contains CCR4, CAF1, NOT1, NOT2, NOT3, NOT4, NOT5, CAF40 and CAF130. In the complex interacts with NOT1. The core complex probably is part of a less characterized 1.9 MDa CCR4-NOT complex.</text>
</comment>
<comment type="interaction">
    <interactant intactId="EBI-13629">
        <id>P39008</id>
    </interactant>
    <interactant intactId="EBI-28306">
        <id>P53829</id>
        <label>CAF40</label>
    </interactant>
    <organismsDiffer>false</organismsDiffer>
    <experiments>9</experiments>
</comment>
<comment type="interaction">
    <interactant intactId="EBI-13629">
        <id>P39008</id>
    </interactant>
    <interactant intactId="EBI-4396">
        <id>P31384</id>
        <label>CCR4</label>
    </interactant>
    <organismsDiffer>false</organismsDiffer>
    <experiments>10</experiments>
</comment>
<comment type="interaction">
    <interactant intactId="EBI-13629">
        <id>P39008</id>
    </interactant>
    <interactant intactId="EBI-12139">
        <id>P25655</id>
        <label>CDC39</label>
    </interactant>
    <organismsDiffer>false</organismsDiffer>
    <experiments>11</experiments>
</comment>
<comment type="interaction">
    <interactant intactId="EBI-13629">
        <id>P39008</id>
    </interactant>
    <interactant intactId="EBI-158">
        <id>P39517</id>
        <label>DHH1</label>
    </interactant>
    <organismsDiffer>false</organismsDiffer>
    <experiments>3</experiments>
</comment>
<comment type="interaction">
    <interactant intactId="EBI-13629">
        <id>P39008</id>
    </interactant>
    <interactant intactId="EBI-11119">
        <id>P40484</id>
        <label>MOB1</label>
    </interactant>
    <organismsDiffer>false</organismsDiffer>
    <experiments>2</experiments>
</comment>
<comment type="interaction">
    <interactant intactId="EBI-13629">
        <id>P39008</id>
    </interactant>
    <interactant intactId="EBI-12174">
        <id>P34909</id>
        <label>MOT2</label>
    </interactant>
    <organismsDiffer>false</organismsDiffer>
    <experiments>4</experiments>
</comment>
<comment type="interaction">
    <interactant intactId="EBI-13629">
        <id>P39008</id>
    </interactant>
    <interactant intactId="EBI-2052996">
        <id>P39016</id>
        <label>MPT5</label>
    </interactant>
    <organismsDiffer>false</organismsDiffer>
    <experiments>4</experiments>
</comment>
<comment type="subcellular location">
    <subcellularLocation>
        <location evidence="4">Cytoplasm</location>
    </subcellularLocation>
    <subcellularLocation>
        <location evidence="4">Nucleus</location>
    </subcellularLocation>
</comment>
<comment type="miscellaneous">
    <text evidence="8">Present with 1520 molecules/cell in log phase SD medium.</text>
</comment>
<comment type="similarity">
    <text evidence="11">Belongs to the CAF1 family.</text>
</comment>
<sequence>MQSMNVQPRVLAVGGEQFFSQRQASEQHQQQNMGPQVYSPKVNRARMFPQGMPVNTINGSVNQEMNNAYLLKQKNEPLLTQQQQQQQQQQQPFNIGTPVSVASLPPGLNVLQQQQQQQQQQQQQQQGVGLNRPLASQLPKHLTNQSMPPIFLPPPNYLFVRDVWKSNLYSEFAVIRQLVSQYNHVSISTEFVGTLARPIGTFRSKVDYHYQTMRANVDFLNPIQLGLSLSDANGNKPDNGPSTWQFNFEFDPKKEIMSTESLELLRKSGINFEKHENLGIDVFEFSQLLMDSGLMMDDSVTWITYHAAYDLGFLINILMNDSMPNNKEDFEWWVHQYMPNFYDLNLVYKIIQEFKNPQLQQSSQQQQQQQYSLTTLADELGLPRFSIFTTTGGQSLLMLLSFCQLSKLSMHKFPNGTDFAKYQGVIYGIDGDQ</sequence>
<dbReference type="EC" id="3.1.13.4"/>
<dbReference type="EMBL" id="D12807">
    <property type="protein sequence ID" value="BAA02246.1"/>
    <property type="molecule type" value="Genomic_DNA"/>
</dbReference>
<dbReference type="EMBL" id="D12808">
    <property type="protein sequence ID" value="BAA02247.1"/>
    <property type="molecule type" value="Genomic_DNA"/>
</dbReference>
<dbReference type="EMBL" id="Z71667">
    <property type="protein sequence ID" value="CAA96333.1"/>
    <property type="molecule type" value="Genomic_DNA"/>
</dbReference>
<dbReference type="EMBL" id="AY692792">
    <property type="protein sequence ID" value="AAT92811.1"/>
    <property type="molecule type" value="Genomic_DNA"/>
</dbReference>
<dbReference type="EMBL" id="M88607">
    <property type="protein sequence ID" value="AAA34832.1"/>
    <property type="molecule type" value="Genomic_DNA"/>
</dbReference>
<dbReference type="EMBL" id="BK006947">
    <property type="protein sequence ID" value="DAA10593.1"/>
    <property type="molecule type" value="Genomic_DNA"/>
</dbReference>
<dbReference type="PIR" id="S63383">
    <property type="entry name" value="S63383"/>
</dbReference>
<dbReference type="RefSeq" id="NP_014450.3">
    <property type="nucleotide sequence ID" value="NM_001183229.3"/>
</dbReference>
<dbReference type="PDB" id="1UOC">
    <property type="method" value="X-ray"/>
    <property type="resolution" value="2.30 A"/>
    <property type="chains" value="A/B=147-433"/>
</dbReference>
<dbReference type="PDB" id="4B8A">
    <property type="method" value="X-ray"/>
    <property type="resolution" value="2.40 A"/>
    <property type="chains" value="B=151-433"/>
</dbReference>
<dbReference type="PDB" id="4B8C">
    <property type="method" value="X-ray"/>
    <property type="resolution" value="3.41 A"/>
    <property type="chains" value="A/C/E/F=146-433"/>
</dbReference>
<dbReference type="PDBsum" id="1UOC"/>
<dbReference type="PDBsum" id="4B8A"/>
<dbReference type="PDBsum" id="4B8C"/>
<dbReference type="SMR" id="P39008"/>
<dbReference type="BioGRID" id="35877">
    <property type="interactions" value="280"/>
</dbReference>
<dbReference type="ComplexPortal" id="CPX-1800">
    <property type="entry name" value="CCR4-NOT mRNA deadenylase complex"/>
</dbReference>
<dbReference type="DIP" id="DIP-1957N"/>
<dbReference type="FunCoup" id="P39008">
    <property type="interactions" value="1165"/>
</dbReference>
<dbReference type="IntAct" id="P39008">
    <property type="interactions" value="46"/>
</dbReference>
<dbReference type="MINT" id="P39008"/>
<dbReference type="STRING" id="4932.YNR052C"/>
<dbReference type="iPTMnet" id="P39008"/>
<dbReference type="PaxDb" id="4932-YNR052C"/>
<dbReference type="PeptideAtlas" id="P39008"/>
<dbReference type="EnsemblFungi" id="YNR052C_mRNA">
    <property type="protein sequence ID" value="YNR052C"/>
    <property type="gene ID" value="YNR052C"/>
</dbReference>
<dbReference type="GeneID" id="855788"/>
<dbReference type="KEGG" id="sce:YNR052C"/>
<dbReference type="AGR" id="SGD:S000005335"/>
<dbReference type="SGD" id="S000005335">
    <property type="gene designation" value="POP2"/>
</dbReference>
<dbReference type="VEuPathDB" id="FungiDB:YNR052C"/>
<dbReference type="eggNOG" id="KOG0304">
    <property type="taxonomic scope" value="Eukaryota"/>
</dbReference>
<dbReference type="GeneTree" id="ENSGT00390000000080"/>
<dbReference type="HOGENOM" id="CLU_027974_3_1_1"/>
<dbReference type="InParanoid" id="P39008"/>
<dbReference type="OMA" id="WQFNFLY"/>
<dbReference type="OrthoDB" id="1164111at2759"/>
<dbReference type="BioCyc" id="YEAST:G3O-33358-MONOMER"/>
<dbReference type="BioGRID-ORCS" id="855788">
    <property type="hits" value="3 hits in 10 CRISPR screens"/>
</dbReference>
<dbReference type="EvolutionaryTrace" id="P39008"/>
<dbReference type="PRO" id="PR:P39008"/>
<dbReference type="Proteomes" id="UP000002311">
    <property type="component" value="Chromosome XIV"/>
</dbReference>
<dbReference type="RNAct" id="P39008">
    <property type="molecule type" value="protein"/>
</dbReference>
<dbReference type="GO" id="GO:0030015">
    <property type="term" value="C:CCR4-NOT core complex"/>
    <property type="evidence" value="ECO:0000314"/>
    <property type="project" value="SGD"/>
</dbReference>
<dbReference type="GO" id="GO:0005737">
    <property type="term" value="C:cytoplasm"/>
    <property type="evidence" value="ECO:0000314"/>
    <property type="project" value="SGD"/>
</dbReference>
<dbReference type="GO" id="GO:0043332">
    <property type="term" value="C:mating projection tip"/>
    <property type="evidence" value="ECO:0007005"/>
    <property type="project" value="SGD"/>
</dbReference>
<dbReference type="GO" id="GO:0005634">
    <property type="term" value="C:nucleus"/>
    <property type="evidence" value="ECO:0007669"/>
    <property type="project" value="UniProtKB-SubCell"/>
</dbReference>
<dbReference type="GO" id="GO:0000932">
    <property type="term" value="C:P-body"/>
    <property type="evidence" value="ECO:0000314"/>
    <property type="project" value="SGD"/>
</dbReference>
<dbReference type="GO" id="GO:0000175">
    <property type="term" value="F:3'-5'-RNA exonuclease activity"/>
    <property type="evidence" value="ECO:0000314"/>
    <property type="project" value="SGD"/>
</dbReference>
<dbReference type="GO" id="GO:0046872">
    <property type="term" value="F:metal ion binding"/>
    <property type="evidence" value="ECO:0007669"/>
    <property type="project" value="UniProtKB-KW"/>
</dbReference>
<dbReference type="GO" id="GO:0004535">
    <property type="term" value="F:poly(A)-specific ribonuclease activity"/>
    <property type="evidence" value="ECO:0000318"/>
    <property type="project" value="GO_Central"/>
</dbReference>
<dbReference type="GO" id="GO:0003723">
    <property type="term" value="F:RNA binding"/>
    <property type="evidence" value="ECO:0007669"/>
    <property type="project" value="UniProtKB-KW"/>
</dbReference>
<dbReference type="GO" id="GO:0000288">
    <property type="term" value="P:nuclear-transcribed mRNA catabolic process, deadenylation-dependent decay"/>
    <property type="evidence" value="ECO:0000318"/>
    <property type="project" value="GO_Central"/>
</dbReference>
<dbReference type="GO" id="GO:0000289">
    <property type="term" value="P:nuclear-transcribed mRNA poly(A) tail shortening"/>
    <property type="evidence" value="ECO:0000314"/>
    <property type="project" value="SGD"/>
</dbReference>
<dbReference type="GO" id="GO:0032968">
    <property type="term" value="P:positive regulation of transcription elongation by RNA polymerase II"/>
    <property type="evidence" value="ECO:0000314"/>
    <property type="project" value="ComplexPortal"/>
</dbReference>
<dbReference type="GO" id="GO:0006368">
    <property type="term" value="P:transcription elongation by RNA polymerase II"/>
    <property type="evidence" value="ECO:0000315"/>
    <property type="project" value="SGD"/>
</dbReference>
<dbReference type="FunFam" id="3.30.420.10:FF:000107">
    <property type="entry name" value="Poly(A) ribonuclease POP2"/>
    <property type="match status" value="1"/>
</dbReference>
<dbReference type="Gene3D" id="3.30.420.10">
    <property type="entry name" value="Ribonuclease H-like superfamily/Ribonuclease H"/>
    <property type="match status" value="1"/>
</dbReference>
<dbReference type="InterPro" id="IPR039637">
    <property type="entry name" value="CNOT7/CNOT8/Pop2"/>
</dbReference>
<dbReference type="InterPro" id="IPR006941">
    <property type="entry name" value="RNase_CAF1"/>
</dbReference>
<dbReference type="InterPro" id="IPR012337">
    <property type="entry name" value="RNaseH-like_sf"/>
</dbReference>
<dbReference type="InterPro" id="IPR036397">
    <property type="entry name" value="RNaseH_sf"/>
</dbReference>
<dbReference type="PANTHER" id="PTHR10797">
    <property type="entry name" value="CCR4-NOT TRANSCRIPTION COMPLEX SUBUNIT"/>
    <property type="match status" value="1"/>
</dbReference>
<dbReference type="Pfam" id="PF04857">
    <property type="entry name" value="CAF1"/>
    <property type="match status" value="1"/>
</dbReference>
<dbReference type="SUPFAM" id="SSF53098">
    <property type="entry name" value="Ribonuclease H-like"/>
    <property type="match status" value="1"/>
</dbReference>
<proteinExistence type="evidence at protein level"/>
<name>POP2_YEAST</name>
<feature type="chain" id="PRO_0000212849" description="Poly(A) ribonuclease POP2">
    <location>
        <begin position="1"/>
        <end position="433"/>
    </location>
</feature>
<feature type="region of interest" description="Disordered" evidence="2">
    <location>
        <begin position="78"/>
        <end position="98"/>
    </location>
</feature>
<feature type="compositionally biased region" description="Low complexity" evidence="2">
    <location>
        <begin position="81"/>
        <end position="91"/>
    </location>
</feature>
<feature type="binding site" evidence="1">
    <location>
        <position position="188"/>
    </location>
    <ligand>
        <name>a divalent metal cation</name>
        <dbReference type="ChEBI" id="CHEBI:60240"/>
        <note>catalytic</note>
    </ligand>
</feature>
<feature type="binding site" evidence="1">
    <location>
        <position position="190"/>
    </location>
    <ligand>
        <name>a divalent metal cation</name>
        <dbReference type="ChEBI" id="CHEBI:60240"/>
        <note>catalytic</note>
    </ligand>
</feature>
<feature type="binding site" evidence="1">
    <location>
        <position position="310"/>
    </location>
    <ligand>
        <name>a divalent metal cation</name>
        <dbReference type="ChEBI" id="CHEBI:60240"/>
        <note>catalytic</note>
    </ligand>
</feature>
<feature type="binding site" evidence="1">
    <location>
        <position position="394"/>
    </location>
    <ligand>
        <name>a divalent metal cation</name>
        <dbReference type="ChEBI" id="CHEBI:60240"/>
        <note>catalytic</note>
    </ligand>
</feature>
<feature type="modified residue" description="N-acetylmethionine" evidence="12">
    <location>
        <position position="1"/>
    </location>
</feature>
<feature type="modified residue" description="Phosphothreonine; by YAK1" evidence="5">
    <location>
        <position position="97"/>
    </location>
</feature>
<feature type="sequence variant" description="In strain: A364A.">
    <original>K</original>
    <variation>Q</variation>
    <location>
        <position position="41"/>
    </location>
</feature>
<feature type="sequence variant" description="In strain: A364A.">
    <original>Q</original>
    <variation>QQQQQQQQQQQQQQQQQQ</variation>
    <location>
        <position position="91"/>
    </location>
</feature>
<feature type="sequence variant" description="In strain: A364A.">
    <location>
        <begin position="118"/>
        <end position="122"/>
    </location>
</feature>
<feature type="sequence variant" description="In strain: A364A.">
    <original>L</original>
    <variation>S</variation>
    <location>
        <position position="278"/>
    </location>
</feature>
<feature type="sequence variant">
    <original>K</original>
    <variation>M</variation>
    <location>
        <position position="412"/>
    </location>
</feature>
<feature type="mutagenesis site" description="No cell-cycle stop in response to glucose deprivation." evidence="5">
    <original>T</original>
    <variation>A</variation>
    <location>
        <position position="97"/>
    </location>
</feature>
<feature type="mutagenesis site" description="Abolishes poly(A) RNA degradation; when associated with A-190." evidence="9">
    <original>S</original>
    <variation>A</variation>
    <location>
        <position position="188"/>
    </location>
</feature>
<feature type="mutagenesis site" description="Abolishes poly(A) RNA degradation; when associated with A-188." evidence="9">
    <original>E</original>
    <variation>A</variation>
    <location>
        <position position="190"/>
    </location>
</feature>
<feature type="helix" evidence="13">
    <location>
        <begin position="155"/>
        <end position="158"/>
    </location>
</feature>
<feature type="strand" evidence="13">
    <location>
        <begin position="161"/>
        <end position="163"/>
    </location>
</feature>
<feature type="turn" evidence="13">
    <location>
        <begin position="165"/>
        <end position="167"/>
    </location>
</feature>
<feature type="helix" evidence="13">
    <location>
        <begin position="168"/>
        <end position="178"/>
    </location>
</feature>
<feature type="turn" evidence="13">
    <location>
        <begin position="179"/>
        <end position="181"/>
    </location>
</feature>
<feature type="strand" evidence="13">
    <location>
        <begin position="184"/>
        <end position="192"/>
    </location>
</feature>
<feature type="strand" evidence="15">
    <location>
        <begin position="197"/>
        <end position="200"/>
    </location>
</feature>
<feature type="helix" evidence="13">
    <location>
        <begin position="205"/>
        <end position="217"/>
    </location>
</feature>
<feature type="strand" evidence="13">
    <location>
        <begin position="221"/>
        <end position="230"/>
    </location>
</feature>
<feature type="strand" evidence="13">
    <location>
        <begin position="238"/>
        <end position="240"/>
    </location>
</feature>
<feature type="strand" evidence="13">
    <location>
        <begin position="242"/>
        <end position="248"/>
    </location>
</feature>
<feature type="turn" evidence="14">
    <location>
        <begin position="252"/>
        <end position="254"/>
    </location>
</feature>
<feature type="helix" evidence="13">
    <location>
        <begin position="259"/>
        <end position="267"/>
    </location>
</feature>
<feature type="helix" evidence="13">
    <location>
        <begin position="272"/>
        <end position="278"/>
    </location>
</feature>
<feature type="helix" evidence="13">
    <location>
        <begin position="282"/>
        <end position="290"/>
    </location>
</feature>
<feature type="strand" evidence="14">
    <location>
        <begin position="292"/>
        <end position="296"/>
    </location>
</feature>
<feature type="strand" evidence="13">
    <location>
        <begin position="300"/>
        <end position="306"/>
    </location>
</feature>
<feature type="helix" evidence="13">
    <location>
        <begin position="309"/>
        <end position="318"/>
    </location>
</feature>
<feature type="helix" evidence="13">
    <location>
        <begin position="327"/>
        <end position="337"/>
    </location>
</feature>
<feature type="strand" evidence="13">
    <location>
        <begin position="339"/>
        <end position="343"/>
    </location>
</feature>
<feature type="helix" evidence="13">
    <location>
        <begin position="344"/>
        <end position="351"/>
    </location>
</feature>
<feature type="helix" evidence="14">
    <location>
        <begin position="353"/>
        <end position="355"/>
    </location>
</feature>
<feature type="helix" evidence="13">
    <location>
        <begin position="373"/>
        <end position="379"/>
    </location>
</feature>
<feature type="helix" evidence="13">
    <location>
        <begin position="386"/>
        <end position="389"/>
    </location>
</feature>
<feature type="helix" evidence="13">
    <location>
        <begin position="391"/>
        <end position="408"/>
    </location>
</feature>
<feature type="turn" evidence="13">
    <location>
        <begin position="409"/>
        <end position="411"/>
    </location>
</feature>
<feature type="helix" evidence="13">
    <location>
        <begin position="419"/>
        <end position="422"/>
    </location>
</feature>
<protein>
    <recommendedName>
        <fullName>Poly(A) ribonuclease POP2</fullName>
        <ecNumber>3.1.13.4</ecNumber>
    </recommendedName>
    <alternativeName>
        <fullName>CCR4-associated factor 1</fullName>
    </alternativeName>
</protein>
<evidence type="ECO:0000255" key="1"/>
<evidence type="ECO:0000256" key="2">
    <source>
        <dbReference type="SAM" id="MobiDB-lite"/>
    </source>
</evidence>
<evidence type="ECO:0000269" key="3">
    <source>
    </source>
</evidence>
<evidence type="ECO:0000269" key="4">
    <source>
    </source>
</evidence>
<evidence type="ECO:0000269" key="5">
    <source>
    </source>
</evidence>
<evidence type="ECO:0000269" key="6">
    <source>
    </source>
</evidence>
<evidence type="ECO:0000269" key="7">
    <source>
    </source>
</evidence>
<evidence type="ECO:0000269" key="8">
    <source>
    </source>
</evidence>
<evidence type="ECO:0000269" key="9">
    <source>
    </source>
</evidence>
<evidence type="ECO:0000269" key="10">
    <source>
    </source>
</evidence>
<evidence type="ECO:0000305" key="11"/>
<evidence type="ECO:0007744" key="12">
    <source>
    </source>
</evidence>
<evidence type="ECO:0007829" key="13">
    <source>
        <dbReference type="PDB" id="1UOC"/>
    </source>
</evidence>
<evidence type="ECO:0007829" key="14">
    <source>
        <dbReference type="PDB" id="4B8A"/>
    </source>
</evidence>
<evidence type="ECO:0007829" key="15">
    <source>
        <dbReference type="PDB" id="4B8C"/>
    </source>
</evidence>
<reference key="1">
    <citation type="journal article" date="1992" name="Nucleic Acids Res.">
        <title>Molecular analysis of POP2 gene, a gene required for glucose-derepression of gene expression in Saccharomyces cerevisiae.</title>
        <authorList>
            <person name="Sakai A."/>
            <person name="Chibazakura T."/>
            <person name="Shimizu Y."/>
            <person name="Hishinuma F."/>
        </authorList>
    </citation>
    <scope>NUCLEOTIDE SEQUENCE [GENOMIC DNA]</scope>
    <source>
        <strain>ATCC 204508 / S288c</strain>
        <strain>ATCC 204626 / S288c / A364A</strain>
    </source>
</reference>
<reference key="2">
    <citation type="journal article" date="1997" name="Nature">
        <title>The nucleotide sequence of Saccharomyces cerevisiae chromosome XIV and its evolutionary implications.</title>
        <authorList>
            <person name="Philippsen P."/>
            <person name="Kleine K."/>
            <person name="Poehlmann R."/>
            <person name="Duesterhoeft A."/>
            <person name="Hamberg K."/>
            <person name="Hegemann J.H."/>
            <person name="Obermaier B."/>
            <person name="Urrestarazu L.A."/>
            <person name="Aert R."/>
            <person name="Albermann K."/>
            <person name="Altmann R."/>
            <person name="Andre B."/>
            <person name="Baladron V."/>
            <person name="Ballesta J.P.G."/>
            <person name="Becam A.-M."/>
            <person name="Beinhauer J.D."/>
            <person name="Boskovic J."/>
            <person name="Buitrago M.J."/>
            <person name="Bussereau F."/>
            <person name="Coster F."/>
            <person name="Crouzet M."/>
            <person name="D'Angelo M."/>
            <person name="Dal Pero F."/>
            <person name="De Antoni A."/>
            <person name="del Rey F."/>
            <person name="Doignon F."/>
            <person name="Domdey H."/>
            <person name="Dubois E."/>
            <person name="Fiedler T.A."/>
            <person name="Fleig U."/>
            <person name="Floeth M."/>
            <person name="Fritz C."/>
            <person name="Gaillardin C."/>
            <person name="Garcia-Cantalejo J.M."/>
            <person name="Glansdorff N."/>
            <person name="Goffeau A."/>
            <person name="Gueldener U."/>
            <person name="Herbert C.J."/>
            <person name="Heumann K."/>
            <person name="Heuss-Neitzel D."/>
            <person name="Hilbert H."/>
            <person name="Hinni K."/>
            <person name="Iraqui Houssaini I."/>
            <person name="Jacquet M."/>
            <person name="Jimenez A."/>
            <person name="Jonniaux J.-L."/>
            <person name="Karpfinger-Hartl L."/>
            <person name="Lanfranchi G."/>
            <person name="Lepingle A."/>
            <person name="Levesque H."/>
            <person name="Lyck R."/>
            <person name="Maftahi M."/>
            <person name="Mallet L."/>
            <person name="Maurer C.T.C."/>
            <person name="Messenguy F."/>
            <person name="Mewes H.-W."/>
            <person name="Moestl D."/>
            <person name="Nasr F."/>
            <person name="Nicaud J.-M."/>
            <person name="Niedenthal R.K."/>
            <person name="Pandolfo D."/>
            <person name="Pierard A."/>
            <person name="Piravandi E."/>
            <person name="Planta R.J."/>
            <person name="Pohl T.M."/>
            <person name="Purnelle B."/>
            <person name="Rebischung C."/>
            <person name="Remacha M.A."/>
            <person name="Revuelta J.L."/>
            <person name="Rinke M."/>
            <person name="Saiz J.E."/>
            <person name="Sartorello F."/>
            <person name="Scherens B."/>
            <person name="Sen-Gupta M."/>
            <person name="Soler-Mira A."/>
            <person name="Urbanus J.H.M."/>
            <person name="Valle G."/>
            <person name="Van Dyck L."/>
            <person name="Verhasselt P."/>
            <person name="Vierendeels F."/>
            <person name="Vissers S."/>
            <person name="Voet M."/>
            <person name="Volckaert G."/>
            <person name="Wach A."/>
            <person name="Wambutt R."/>
            <person name="Wedler H."/>
            <person name="Zollner A."/>
            <person name="Hani J."/>
        </authorList>
    </citation>
    <scope>NUCLEOTIDE SEQUENCE [LARGE SCALE GENOMIC DNA]</scope>
    <source>
        <strain>ATCC 204508 / S288c</strain>
    </source>
</reference>
<reference key="3">
    <citation type="journal article" date="2014" name="G3 (Bethesda)">
        <title>The reference genome sequence of Saccharomyces cerevisiae: Then and now.</title>
        <authorList>
            <person name="Engel S.R."/>
            <person name="Dietrich F.S."/>
            <person name="Fisk D.G."/>
            <person name="Binkley G."/>
            <person name="Balakrishnan R."/>
            <person name="Costanzo M.C."/>
            <person name="Dwight S.S."/>
            <person name="Hitz B.C."/>
            <person name="Karra K."/>
            <person name="Nash R.S."/>
            <person name="Weng S."/>
            <person name="Wong E.D."/>
            <person name="Lloyd P."/>
            <person name="Skrzypek M.S."/>
            <person name="Miyasato S.R."/>
            <person name="Simison M."/>
            <person name="Cherry J.M."/>
        </authorList>
    </citation>
    <scope>GENOME REANNOTATION</scope>
    <source>
        <strain>ATCC 204508 / S288c</strain>
    </source>
</reference>
<reference key="4">
    <citation type="journal article" date="2007" name="Genome Res.">
        <title>Approaching a complete repository of sequence-verified protein-encoding clones for Saccharomyces cerevisiae.</title>
        <authorList>
            <person name="Hu Y."/>
            <person name="Rolfs A."/>
            <person name="Bhullar B."/>
            <person name="Murthy T.V.S."/>
            <person name="Zhu C."/>
            <person name="Berger M.F."/>
            <person name="Camargo A.A."/>
            <person name="Kelley F."/>
            <person name="McCarron S."/>
            <person name="Jepson D."/>
            <person name="Richardson A."/>
            <person name="Raphael J."/>
            <person name="Moreira D."/>
            <person name="Taycher E."/>
            <person name="Zuo D."/>
            <person name="Mohr S."/>
            <person name="Kane M.F."/>
            <person name="Williamson J."/>
            <person name="Simpson A.J.G."/>
            <person name="Bulyk M.L."/>
            <person name="Harlow E."/>
            <person name="Marsischky G."/>
            <person name="Kolodner R.D."/>
            <person name="LaBaer J."/>
        </authorList>
    </citation>
    <scope>NUCLEOTIDE SEQUENCE [GENOMIC DNA]</scope>
    <source>
        <strain>ATCC 204508 / S288c</strain>
    </source>
</reference>
<reference key="5">
    <citation type="submission" date="1992-03" db="EMBL/GenBank/DDBJ databases">
        <authorList>
            <person name="Cusick M.E."/>
        </authorList>
    </citation>
    <scope>NUCLEOTIDE SEQUENCE [GENOMIC DNA] OF 213-433</scope>
</reference>
<reference key="6">
    <citation type="journal article" date="1995" name="Mol. Cell. Biol.">
        <title>Identification of a mouse protein whose homolog in Saccharomyces cerevisiae is a component of the CCR4 transcriptional regulatory complex.</title>
        <authorList>
            <person name="Draper M.P."/>
            <person name="Salvadore C."/>
            <person name="Denis C.L."/>
        </authorList>
    </citation>
    <scope>CHARACTERIZATION</scope>
</reference>
<reference key="7">
    <citation type="journal article" date="1998" name="EMBO J.">
        <title>The NOT proteins are part of the CCR4 transcriptional complex and affect gene expression both positively and negatively.</title>
        <authorList>
            <person name="Liu H.Y."/>
            <person name="Badarinarayana V."/>
            <person name="Audino D.C."/>
            <person name="Rappsilber J."/>
            <person name="Mann M."/>
            <person name="Denis C.L."/>
        </authorList>
    </citation>
    <scope>IDENTIFICATION IN THE CCR4-NOT CORE COMPLEX</scope>
    <scope>FUNCTION OF THE CCR4-NOT CORE COMPLEX IN TRANSCRIPTIONAL REGULATION</scope>
</reference>
<reference key="8">
    <citation type="journal article" date="1999" name="Mol. Cell. Biol.">
        <title>The CCR4 and CAF1 proteins of the CCR4-NOT complex are physically and functionally separated from NOT2, NOT4, and NOT5.</title>
        <authorList>
            <person name="Bai Y."/>
            <person name="Salvadore C."/>
            <person name="Chiang Y.C."/>
            <person name="Collart M.A."/>
            <person name="Liu H.Y."/>
            <person name="Denis C.L."/>
        </authorList>
    </citation>
    <scope>INTERACTION WITH NOT1</scope>
</reference>
<reference key="9">
    <citation type="journal article" date="2001" name="Cell">
        <title>The transcription factor associated Ccr4 and Caf1 proteins are components of the major cytoplasmic mRNA deadenylase in Saccharomyces cerevisiae.</title>
        <authorList>
            <person name="Tucker M."/>
            <person name="Valencia-Sanchez M.A."/>
            <person name="Staples R.R."/>
            <person name="Chen J."/>
            <person name="Denis C.L."/>
            <person name="Parker R."/>
        </authorList>
    </citation>
    <scope>FUNCTION IN MRNA DEADENYLATION</scope>
    <scope>SUBCELLULAR LOCATION</scope>
</reference>
<reference key="10">
    <citation type="journal article" date="2001" name="J. Mol. Biol.">
        <title>Purification and characterization of the 1.0 MDa CCR4-NOT complex identifies two novel components of the complex.</title>
        <authorList>
            <person name="Chen J."/>
            <person name="Rappsilber J."/>
            <person name="Chiang Y.C."/>
            <person name="Russell P."/>
            <person name="Mann M."/>
            <person name="Denis C.L."/>
        </authorList>
    </citation>
    <scope>IDENTIFICATION IN THE CCR4-NOT CORE COMPLEX</scope>
</reference>
<reference key="11">
    <citation type="journal article" date="2001" name="Nucleic Acids Res.">
        <title>The yeast POP2 gene encodes a nuclease involved in mRNA deadenylation.</title>
        <authorList>
            <person name="Daugeron M.-C."/>
            <person name="Mauxion F."/>
            <person name="Seraphin B."/>
        </authorList>
    </citation>
    <scope>FUNCTION IN MRNA DEADENYLATION</scope>
</reference>
<reference key="12">
    <citation type="journal article" date="2001" name="Genes Dev.">
        <title>Yak1p, a DYRK family kinase, translocates to the nucleus and phosphorylates yeast Pop2p in response to a glucose signal.</title>
        <authorList>
            <person name="Moriya H."/>
            <person name="Shimizu-Yoshida Y."/>
            <person name="Omori A."/>
            <person name="Iwashita S."/>
            <person name="Katoh M."/>
            <person name="Sakai A."/>
        </authorList>
    </citation>
    <scope>PHOSPHORYLATION AT THR-97</scope>
    <scope>MUTAGENESIS OF THR-97</scope>
</reference>
<reference key="13">
    <citation type="journal article" date="2003" name="Nature">
        <title>Global analysis of protein expression in yeast.</title>
        <authorList>
            <person name="Ghaemmaghami S."/>
            <person name="Huh W.-K."/>
            <person name="Bower K."/>
            <person name="Howson R.W."/>
            <person name="Belle A."/>
            <person name="Dephoure N."/>
            <person name="O'Shea E.K."/>
            <person name="Weissman J.S."/>
        </authorList>
    </citation>
    <scope>LEVEL OF PROTEIN EXPRESSION [LARGE SCALE ANALYSIS]</scope>
</reference>
<reference key="14">
    <citation type="journal article" date="2012" name="Proc. Natl. Acad. Sci. U.S.A.">
        <title>N-terminal acetylome analyses and functional insights of the N-terminal acetyltransferase NatB.</title>
        <authorList>
            <person name="Van Damme P."/>
            <person name="Lasa M."/>
            <person name="Polevoda B."/>
            <person name="Gazquez C."/>
            <person name="Elosegui-Artola A."/>
            <person name="Kim D.S."/>
            <person name="De Juan-Pardo E."/>
            <person name="Demeyer K."/>
            <person name="Hole K."/>
            <person name="Larrea E."/>
            <person name="Timmerman E."/>
            <person name="Prieto J."/>
            <person name="Arnesen T."/>
            <person name="Sherman F."/>
            <person name="Gevaert K."/>
            <person name="Aldabe R."/>
        </authorList>
    </citation>
    <scope>ACETYLATION [LARGE SCALE ANALYSIS] AT MET-1</scope>
    <scope>IDENTIFICATION BY MASS SPECTROMETRY [LARGE SCALE ANALYSIS]</scope>
</reference>
<reference key="15">
    <citation type="journal article" date="2003" name="EMBO Rep.">
        <title>X-ray structure and activity of the yeast Pop2 protein: a nuclease subunit of the mRNA deadenylase complex.</title>
        <authorList>
            <person name="Thore S."/>
            <person name="Mauxion F."/>
            <person name="Seraphin B."/>
            <person name="Suck D."/>
        </authorList>
    </citation>
    <scope>X-RAY CRYSTALLOGRAPHY (2.3 ANGSTROMS) OF 147-433 IN COMPLEX WITH METAL IONS</scope>
    <scope>FUNCTION IN MRNA DEADENYLATION</scope>
    <scope>MUTAGENESIS OF SER-188 AND GLU-190</scope>
</reference>
<gene>
    <name type="primary">POP2</name>
    <name type="synonym">CAF1</name>
    <name type="ordered locus">YNR052C</name>
    <name type="ORF">N3470</name>
</gene>
<keyword id="KW-0002">3D-structure</keyword>
<keyword id="KW-0007">Acetylation</keyword>
<keyword id="KW-0010">Activator</keyword>
<keyword id="KW-0963">Cytoplasm</keyword>
<keyword id="KW-0269">Exonuclease</keyword>
<keyword id="KW-0378">Hydrolase</keyword>
<keyword id="KW-0460">Magnesium</keyword>
<keyword id="KW-0479">Metal-binding</keyword>
<keyword id="KW-0540">Nuclease</keyword>
<keyword id="KW-0539">Nucleus</keyword>
<keyword id="KW-0597">Phosphoprotein</keyword>
<keyword id="KW-1185">Reference proteome</keyword>
<keyword id="KW-0678">Repressor</keyword>
<keyword id="KW-0694">RNA-binding</keyword>
<keyword id="KW-0804">Transcription</keyword>
<keyword id="KW-0805">Transcription regulation</keyword>